<evidence type="ECO:0000255" key="1">
    <source>
        <dbReference type="HAMAP-Rule" id="MF_00057"/>
    </source>
</evidence>
<reference key="1">
    <citation type="submission" date="2006-08" db="EMBL/GenBank/DDBJ databases">
        <title>Complete sequence of Maricaulis maris MCS10.</title>
        <authorList>
            <consortium name="US DOE Joint Genome Institute"/>
            <person name="Copeland A."/>
            <person name="Lucas S."/>
            <person name="Lapidus A."/>
            <person name="Barry K."/>
            <person name="Detter J.C."/>
            <person name="Glavina del Rio T."/>
            <person name="Hammon N."/>
            <person name="Israni S."/>
            <person name="Dalin E."/>
            <person name="Tice H."/>
            <person name="Pitluck S."/>
            <person name="Saunders E."/>
            <person name="Brettin T."/>
            <person name="Bruce D."/>
            <person name="Han C."/>
            <person name="Tapia R."/>
            <person name="Gilna P."/>
            <person name="Schmutz J."/>
            <person name="Larimer F."/>
            <person name="Land M."/>
            <person name="Hauser L."/>
            <person name="Kyrpides N."/>
            <person name="Mikhailova N."/>
            <person name="Viollier P."/>
            <person name="Stephens C."/>
            <person name="Richardson P."/>
        </authorList>
    </citation>
    <scope>NUCLEOTIDE SEQUENCE [LARGE SCALE GENOMIC DNA]</scope>
    <source>
        <strain>MCS10</strain>
    </source>
</reference>
<feature type="chain" id="PRO_0000370092" description="3-deoxy-manno-octulosonate cytidylyltransferase">
    <location>
        <begin position="1"/>
        <end position="259"/>
    </location>
</feature>
<dbReference type="EC" id="2.7.7.38" evidence="1"/>
<dbReference type="EMBL" id="CP000449">
    <property type="protein sequence ID" value="ABI64656.1"/>
    <property type="molecule type" value="Genomic_DNA"/>
</dbReference>
<dbReference type="RefSeq" id="WP_011642303.1">
    <property type="nucleotide sequence ID" value="NC_008347.1"/>
</dbReference>
<dbReference type="SMR" id="Q0AST1"/>
<dbReference type="STRING" id="394221.Mmar10_0363"/>
<dbReference type="KEGG" id="mmr:Mmar10_0363"/>
<dbReference type="eggNOG" id="COG1212">
    <property type="taxonomic scope" value="Bacteria"/>
</dbReference>
<dbReference type="HOGENOM" id="CLU_065038_0_1_5"/>
<dbReference type="OrthoDB" id="9815559at2"/>
<dbReference type="UniPathway" id="UPA00030"/>
<dbReference type="UniPathway" id="UPA00358">
    <property type="reaction ID" value="UER00476"/>
</dbReference>
<dbReference type="Proteomes" id="UP000001964">
    <property type="component" value="Chromosome"/>
</dbReference>
<dbReference type="GO" id="GO:0005829">
    <property type="term" value="C:cytosol"/>
    <property type="evidence" value="ECO:0007669"/>
    <property type="project" value="TreeGrafter"/>
</dbReference>
<dbReference type="GO" id="GO:0008690">
    <property type="term" value="F:3-deoxy-manno-octulosonate cytidylyltransferase activity"/>
    <property type="evidence" value="ECO:0007669"/>
    <property type="project" value="UniProtKB-UniRule"/>
</dbReference>
<dbReference type="GO" id="GO:0033468">
    <property type="term" value="P:CMP-keto-3-deoxy-D-manno-octulosonic acid biosynthetic process"/>
    <property type="evidence" value="ECO:0007669"/>
    <property type="project" value="UniProtKB-UniRule"/>
</dbReference>
<dbReference type="GO" id="GO:0009103">
    <property type="term" value="P:lipopolysaccharide biosynthetic process"/>
    <property type="evidence" value="ECO:0007669"/>
    <property type="project" value="UniProtKB-UniRule"/>
</dbReference>
<dbReference type="CDD" id="cd02517">
    <property type="entry name" value="CMP-KDO-Synthetase"/>
    <property type="match status" value="1"/>
</dbReference>
<dbReference type="Gene3D" id="3.90.550.10">
    <property type="entry name" value="Spore Coat Polysaccharide Biosynthesis Protein SpsA, Chain A"/>
    <property type="match status" value="1"/>
</dbReference>
<dbReference type="HAMAP" id="MF_00057">
    <property type="entry name" value="KdsB"/>
    <property type="match status" value="1"/>
</dbReference>
<dbReference type="InterPro" id="IPR003329">
    <property type="entry name" value="Cytidylyl_trans"/>
</dbReference>
<dbReference type="InterPro" id="IPR004528">
    <property type="entry name" value="KdsB"/>
</dbReference>
<dbReference type="InterPro" id="IPR029044">
    <property type="entry name" value="Nucleotide-diphossugar_trans"/>
</dbReference>
<dbReference type="NCBIfam" id="TIGR00466">
    <property type="entry name" value="kdsB"/>
    <property type="match status" value="1"/>
</dbReference>
<dbReference type="NCBIfam" id="NF003950">
    <property type="entry name" value="PRK05450.1-3"/>
    <property type="match status" value="1"/>
</dbReference>
<dbReference type="NCBIfam" id="NF003952">
    <property type="entry name" value="PRK05450.1-5"/>
    <property type="match status" value="1"/>
</dbReference>
<dbReference type="PANTHER" id="PTHR42866">
    <property type="entry name" value="3-DEOXY-MANNO-OCTULOSONATE CYTIDYLYLTRANSFERASE"/>
    <property type="match status" value="1"/>
</dbReference>
<dbReference type="PANTHER" id="PTHR42866:SF2">
    <property type="entry name" value="3-DEOXY-MANNO-OCTULOSONATE CYTIDYLYLTRANSFERASE, MITOCHONDRIAL"/>
    <property type="match status" value="1"/>
</dbReference>
<dbReference type="Pfam" id="PF02348">
    <property type="entry name" value="CTP_transf_3"/>
    <property type="match status" value="1"/>
</dbReference>
<dbReference type="SUPFAM" id="SSF53448">
    <property type="entry name" value="Nucleotide-diphospho-sugar transferases"/>
    <property type="match status" value="1"/>
</dbReference>
<comment type="function">
    <text evidence="1">Activates KDO (a required 8-carbon sugar) for incorporation into bacterial lipopolysaccharide in Gram-negative bacteria.</text>
</comment>
<comment type="catalytic activity">
    <reaction evidence="1">
        <text>3-deoxy-alpha-D-manno-oct-2-ulosonate + CTP = CMP-3-deoxy-beta-D-manno-octulosonate + diphosphate</text>
        <dbReference type="Rhea" id="RHEA:23448"/>
        <dbReference type="ChEBI" id="CHEBI:33019"/>
        <dbReference type="ChEBI" id="CHEBI:37563"/>
        <dbReference type="ChEBI" id="CHEBI:85986"/>
        <dbReference type="ChEBI" id="CHEBI:85987"/>
        <dbReference type="EC" id="2.7.7.38"/>
    </reaction>
</comment>
<comment type="pathway">
    <text evidence="1">Nucleotide-sugar biosynthesis; CMP-3-deoxy-D-manno-octulosonate biosynthesis; CMP-3-deoxy-D-manno-octulosonate from 3-deoxy-D-manno-octulosonate and CTP: step 1/1.</text>
</comment>
<comment type="pathway">
    <text evidence="1">Bacterial outer membrane biogenesis; lipopolysaccharide biosynthesis.</text>
</comment>
<comment type="subcellular location">
    <subcellularLocation>
        <location evidence="1">Cytoplasm</location>
    </subcellularLocation>
</comment>
<comment type="similarity">
    <text evidence="1">Belongs to the KdsB family.</text>
</comment>
<accession>Q0AST1</accession>
<organism>
    <name type="scientific">Maricaulis maris (strain MCS10)</name>
    <name type="common">Caulobacter maris</name>
    <dbReference type="NCBI Taxonomy" id="394221"/>
    <lineage>
        <taxon>Bacteria</taxon>
        <taxon>Pseudomonadati</taxon>
        <taxon>Pseudomonadota</taxon>
        <taxon>Alphaproteobacteria</taxon>
        <taxon>Maricaulales</taxon>
        <taxon>Maricaulaceae</taxon>
        <taxon>Maricaulis</taxon>
    </lineage>
</organism>
<sequence>MSVLAVIPARYGSTRFPGKPLAMIAGQMMIERVWRIAAAVPGVDRVVVATDDQRIMDAVAAAGGEAVMTDPDCRNGTERALDAVKRLNSDADIVINVQGDAPLIPPWVIGGVAETLRADPSLQMATPAIALPPETEARMRADKANGSASGTTVVFNKAMDAMYFSKNVIPFRRKPDEGAPTYQHIGLYGYRRDTLEGLVALEPTPFELTESLEQLRALENGIPIRVVLTDYRGRSAWSVDAPEDAVRVEGIIAAEGELV</sequence>
<keyword id="KW-0963">Cytoplasm</keyword>
<keyword id="KW-0448">Lipopolysaccharide biosynthesis</keyword>
<keyword id="KW-0548">Nucleotidyltransferase</keyword>
<keyword id="KW-1185">Reference proteome</keyword>
<keyword id="KW-0808">Transferase</keyword>
<name>KDSB_MARMM</name>
<gene>
    <name evidence="1" type="primary">kdsB</name>
    <name type="ordered locus">Mmar10_0363</name>
</gene>
<protein>
    <recommendedName>
        <fullName evidence="1">3-deoxy-manno-octulosonate cytidylyltransferase</fullName>
        <ecNumber evidence="1">2.7.7.38</ecNumber>
    </recommendedName>
    <alternativeName>
        <fullName evidence="1">CMP-2-keto-3-deoxyoctulosonic acid synthase</fullName>
        <shortName evidence="1">CKS</shortName>
        <shortName evidence="1">CMP-KDO synthase</shortName>
    </alternativeName>
</protein>
<proteinExistence type="inferred from homology"/>